<reference key="1">
    <citation type="journal article" date="2011" name="Appl. Environ. Microbiol.">
        <title>Genomic potential of Marinobacter aquaeolei, a biogeochemical 'opportunitroph'.</title>
        <authorList>
            <person name="Singer E."/>
            <person name="Webb E.A."/>
            <person name="Nelson W.C."/>
            <person name="Heidelberg J.F."/>
            <person name="Ivanova N."/>
            <person name="Pati A."/>
            <person name="Edwards K.J."/>
        </authorList>
    </citation>
    <scope>NUCLEOTIDE SEQUENCE [LARGE SCALE GENOMIC DNA]</scope>
    <source>
        <strain>ATCC 700491 / DSM 11845 / VT8</strain>
    </source>
</reference>
<feature type="chain" id="PRO_1000003995" description="Small ribosomal subunit protein uS2">
    <location>
        <begin position="1"/>
        <end position="250"/>
    </location>
</feature>
<evidence type="ECO:0000255" key="1">
    <source>
        <dbReference type="HAMAP-Rule" id="MF_00291"/>
    </source>
</evidence>
<evidence type="ECO:0000305" key="2"/>
<protein>
    <recommendedName>
        <fullName evidence="1">Small ribosomal subunit protein uS2</fullName>
    </recommendedName>
    <alternativeName>
        <fullName evidence="2">30S ribosomal protein S2</fullName>
    </alternativeName>
</protein>
<sequence length="250" mass="27628">MAQVNMRDLLKAGAHFGHQTRYWNPKMSKFIFGARNKIHIINLEQTVPAMNEALNFIQSLAENKNKILFVGTKRAASKIIKEEAQRSGQPYVNHRWLGGMLTNYKTIRQSIRRYRDLEAQSQDGTFDKLTKKEALERTREMDKLERSIGGIKDMGGLPDALFVIDVDHERIAIKEANKLGIPVIGVVDTNSDPDGVDYVIPGNDDAIRAIQIYVKAVADTCLEASQSAGAGADEFVEVSEDAAGAAPAAE</sequence>
<proteinExistence type="inferred from homology"/>
<name>RS2_MARN8</name>
<dbReference type="EMBL" id="CP000514">
    <property type="protein sequence ID" value="ABM19623.1"/>
    <property type="molecule type" value="Genomic_DNA"/>
</dbReference>
<dbReference type="RefSeq" id="WP_011786007.1">
    <property type="nucleotide sequence ID" value="NC_008740.1"/>
</dbReference>
<dbReference type="SMR" id="A1U3Q4"/>
<dbReference type="STRING" id="351348.Maqu_2548"/>
<dbReference type="GeneID" id="31821872"/>
<dbReference type="KEGG" id="maq:Maqu_2548"/>
<dbReference type="eggNOG" id="COG0052">
    <property type="taxonomic scope" value="Bacteria"/>
</dbReference>
<dbReference type="HOGENOM" id="CLU_040318_1_2_6"/>
<dbReference type="OrthoDB" id="9808036at2"/>
<dbReference type="Proteomes" id="UP000000998">
    <property type="component" value="Chromosome"/>
</dbReference>
<dbReference type="GO" id="GO:0022627">
    <property type="term" value="C:cytosolic small ribosomal subunit"/>
    <property type="evidence" value="ECO:0007669"/>
    <property type="project" value="TreeGrafter"/>
</dbReference>
<dbReference type="GO" id="GO:0003735">
    <property type="term" value="F:structural constituent of ribosome"/>
    <property type="evidence" value="ECO:0007669"/>
    <property type="project" value="InterPro"/>
</dbReference>
<dbReference type="GO" id="GO:0006412">
    <property type="term" value="P:translation"/>
    <property type="evidence" value="ECO:0007669"/>
    <property type="project" value="UniProtKB-UniRule"/>
</dbReference>
<dbReference type="CDD" id="cd01425">
    <property type="entry name" value="RPS2"/>
    <property type="match status" value="1"/>
</dbReference>
<dbReference type="FunFam" id="1.10.287.610:FF:000001">
    <property type="entry name" value="30S ribosomal protein S2"/>
    <property type="match status" value="1"/>
</dbReference>
<dbReference type="Gene3D" id="3.40.50.10490">
    <property type="entry name" value="Glucose-6-phosphate isomerase like protein, domain 1"/>
    <property type="match status" value="1"/>
</dbReference>
<dbReference type="Gene3D" id="1.10.287.610">
    <property type="entry name" value="Helix hairpin bin"/>
    <property type="match status" value="1"/>
</dbReference>
<dbReference type="HAMAP" id="MF_00291_B">
    <property type="entry name" value="Ribosomal_uS2_B"/>
    <property type="match status" value="1"/>
</dbReference>
<dbReference type="InterPro" id="IPR001865">
    <property type="entry name" value="Ribosomal_uS2"/>
</dbReference>
<dbReference type="InterPro" id="IPR005706">
    <property type="entry name" value="Ribosomal_uS2_bac/mit/plastid"/>
</dbReference>
<dbReference type="InterPro" id="IPR018130">
    <property type="entry name" value="Ribosomal_uS2_CS"/>
</dbReference>
<dbReference type="InterPro" id="IPR023591">
    <property type="entry name" value="Ribosomal_uS2_flav_dom_sf"/>
</dbReference>
<dbReference type="NCBIfam" id="TIGR01011">
    <property type="entry name" value="rpsB_bact"/>
    <property type="match status" value="1"/>
</dbReference>
<dbReference type="PANTHER" id="PTHR12534">
    <property type="entry name" value="30S RIBOSOMAL PROTEIN S2 PROKARYOTIC AND ORGANELLAR"/>
    <property type="match status" value="1"/>
</dbReference>
<dbReference type="PANTHER" id="PTHR12534:SF0">
    <property type="entry name" value="SMALL RIBOSOMAL SUBUNIT PROTEIN US2M"/>
    <property type="match status" value="1"/>
</dbReference>
<dbReference type="Pfam" id="PF00318">
    <property type="entry name" value="Ribosomal_S2"/>
    <property type="match status" value="1"/>
</dbReference>
<dbReference type="PRINTS" id="PR00395">
    <property type="entry name" value="RIBOSOMALS2"/>
</dbReference>
<dbReference type="SUPFAM" id="SSF52313">
    <property type="entry name" value="Ribosomal protein S2"/>
    <property type="match status" value="1"/>
</dbReference>
<dbReference type="PROSITE" id="PS00962">
    <property type="entry name" value="RIBOSOMAL_S2_1"/>
    <property type="match status" value="1"/>
</dbReference>
<dbReference type="PROSITE" id="PS00963">
    <property type="entry name" value="RIBOSOMAL_S2_2"/>
    <property type="match status" value="1"/>
</dbReference>
<gene>
    <name evidence="1" type="primary">rpsB</name>
    <name type="ordered locus">Maqu_2548</name>
</gene>
<accession>A1U3Q4</accession>
<comment type="similarity">
    <text evidence="1">Belongs to the universal ribosomal protein uS2 family.</text>
</comment>
<organism>
    <name type="scientific">Marinobacter nauticus (strain ATCC 700491 / DSM 11845 / VT8)</name>
    <name type="common">Marinobacter aquaeolei</name>
    <dbReference type="NCBI Taxonomy" id="351348"/>
    <lineage>
        <taxon>Bacteria</taxon>
        <taxon>Pseudomonadati</taxon>
        <taxon>Pseudomonadota</taxon>
        <taxon>Gammaproteobacteria</taxon>
        <taxon>Pseudomonadales</taxon>
        <taxon>Marinobacteraceae</taxon>
        <taxon>Marinobacter</taxon>
    </lineage>
</organism>
<keyword id="KW-0687">Ribonucleoprotein</keyword>
<keyword id="KW-0689">Ribosomal protein</keyword>